<keyword id="KW-0058">Aromatic hydrocarbons catabolism</keyword>
<keyword id="KW-0456">Lyase</keyword>
<keyword id="KW-0464">Manganese</keyword>
<keyword id="KW-0479">Metal-binding</keyword>
<keyword id="KW-1185">Reference proteome</keyword>
<evidence type="ECO:0000255" key="1">
    <source>
        <dbReference type="HAMAP-Rule" id="MF_01656"/>
    </source>
</evidence>
<feature type="chain" id="PRO_0000387781" description="4-hydroxy-2-oxovalerate aldolase 2">
    <location>
        <begin position="1"/>
        <end position="342"/>
    </location>
</feature>
<feature type="domain" description="Pyruvate carboxyltransferase" evidence="1">
    <location>
        <begin position="8"/>
        <end position="260"/>
    </location>
</feature>
<feature type="active site" description="Proton acceptor" evidence="1">
    <location>
        <position position="20"/>
    </location>
</feature>
<feature type="binding site" evidence="1">
    <location>
        <begin position="16"/>
        <end position="17"/>
    </location>
    <ligand>
        <name>substrate</name>
    </ligand>
</feature>
<feature type="binding site" evidence="1">
    <location>
        <position position="17"/>
    </location>
    <ligand>
        <name>Mn(2+)</name>
        <dbReference type="ChEBI" id="CHEBI:29035"/>
    </ligand>
</feature>
<feature type="binding site" evidence="1">
    <location>
        <position position="170"/>
    </location>
    <ligand>
        <name>substrate</name>
    </ligand>
</feature>
<feature type="binding site" evidence="1">
    <location>
        <position position="199"/>
    </location>
    <ligand>
        <name>Mn(2+)</name>
        <dbReference type="ChEBI" id="CHEBI:29035"/>
    </ligand>
</feature>
<feature type="binding site" evidence="1">
    <location>
        <position position="199"/>
    </location>
    <ligand>
        <name>substrate</name>
    </ligand>
</feature>
<feature type="binding site" evidence="1">
    <location>
        <position position="201"/>
    </location>
    <ligand>
        <name>Mn(2+)</name>
        <dbReference type="ChEBI" id="CHEBI:29035"/>
    </ligand>
</feature>
<feature type="binding site" evidence="1">
    <location>
        <position position="290"/>
    </location>
    <ligand>
        <name>substrate</name>
    </ligand>
</feature>
<feature type="site" description="Transition state stabilizer" evidence="1">
    <location>
        <position position="16"/>
    </location>
</feature>
<gene>
    <name type="primary">mhpE</name>
    <name type="ordered locus">azo1972</name>
</gene>
<name>HOA2_AZOSB</name>
<accession>A1K6Y4</accession>
<sequence length="342" mass="36453">MDLRGTRITVHDMTLRDGMHPKRHLMTLEQMKTIAQGLDQAGIPLIEVTHGDGLGGSSVNYGFPAHTDEEYLGAVIPLMKQAKVSALLLPGIGTVDHLKMAHELGVNTIRVATHCTEADVSEQHISYARKLGMDTVGFLMMAHMNSPEGLVQQAKLMESYGANCIYVTDSAGHLLPDTVKARISAVRDALKPETELGFHGHHNLAMGVANSIAAIEAGATRIDAAAAGLGAGAGNTPMEVLIAVCDLMGIETGVDVFKIQDVAEDLVVPIMDFPIRIDRDALTLGYAGVYGSFLLFAKRAEKKYGVPAREILVEMGRRGMVGGQEDMIEDTAITLAKASAAA</sequence>
<comment type="catalytic activity">
    <reaction evidence="1">
        <text>(S)-4-hydroxy-2-oxopentanoate = acetaldehyde + pyruvate</text>
        <dbReference type="Rhea" id="RHEA:22624"/>
        <dbReference type="ChEBI" id="CHEBI:15343"/>
        <dbReference type="ChEBI" id="CHEBI:15361"/>
        <dbReference type="ChEBI" id="CHEBI:73143"/>
        <dbReference type="EC" id="4.1.3.39"/>
    </reaction>
</comment>
<comment type="similarity">
    <text evidence="1">Belongs to the 4-hydroxy-2-oxovalerate aldolase family.</text>
</comment>
<protein>
    <recommendedName>
        <fullName evidence="1">4-hydroxy-2-oxovalerate aldolase 2</fullName>
        <shortName evidence="1">HOA 2</shortName>
        <ecNumber evidence="1">4.1.3.39</ecNumber>
    </recommendedName>
    <alternativeName>
        <fullName evidence="1">4-hydroxy-2-keto-pentanoic acid aldolase 2</fullName>
    </alternativeName>
    <alternativeName>
        <fullName evidence="1">4-hydroxy-2-oxopentanoate aldolase 2</fullName>
    </alternativeName>
</protein>
<dbReference type="EC" id="4.1.3.39" evidence="1"/>
<dbReference type="EMBL" id="AM406670">
    <property type="protein sequence ID" value="CAL94589.1"/>
    <property type="molecule type" value="Genomic_DNA"/>
</dbReference>
<dbReference type="RefSeq" id="WP_011765705.1">
    <property type="nucleotide sequence ID" value="NC_008702.1"/>
</dbReference>
<dbReference type="SMR" id="A1K6Y4"/>
<dbReference type="STRING" id="62928.azo1972"/>
<dbReference type="KEGG" id="azo:azo1972"/>
<dbReference type="eggNOG" id="COG0119">
    <property type="taxonomic scope" value="Bacteria"/>
</dbReference>
<dbReference type="HOGENOM" id="CLU_049173_0_0_4"/>
<dbReference type="Proteomes" id="UP000002588">
    <property type="component" value="Chromosome"/>
</dbReference>
<dbReference type="GO" id="GO:0003852">
    <property type="term" value="F:2-isopropylmalate synthase activity"/>
    <property type="evidence" value="ECO:0007669"/>
    <property type="project" value="TreeGrafter"/>
</dbReference>
<dbReference type="GO" id="GO:0008701">
    <property type="term" value="F:4-hydroxy-2-oxovalerate aldolase activity"/>
    <property type="evidence" value="ECO:0007669"/>
    <property type="project" value="UniProtKB-UniRule"/>
</dbReference>
<dbReference type="GO" id="GO:0030145">
    <property type="term" value="F:manganese ion binding"/>
    <property type="evidence" value="ECO:0007669"/>
    <property type="project" value="UniProtKB-UniRule"/>
</dbReference>
<dbReference type="GO" id="GO:0009056">
    <property type="term" value="P:catabolic process"/>
    <property type="evidence" value="ECO:0007669"/>
    <property type="project" value="UniProtKB-KW"/>
</dbReference>
<dbReference type="GO" id="GO:0009098">
    <property type="term" value="P:L-leucine biosynthetic process"/>
    <property type="evidence" value="ECO:0007669"/>
    <property type="project" value="TreeGrafter"/>
</dbReference>
<dbReference type="CDD" id="cd07943">
    <property type="entry name" value="DRE_TIM_HOA"/>
    <property type="match status" value="1"/>
</dbReference>
<dbReference type="Gene3D" id="1.10.8.60">
    <property type="match status" value="1"/>
</dbReference>
<dbReference type="Gene3D" id="3.20.20.70">
    <property type="entry name" value="Aldolase class I"/>
    <property type="match status" value="1"/>
</dbReference>
<dbReference type="HAMAP" id="MF_01656">
    <property type="entry name" value="HOA"/>
    <property type="match status" value="1"/>
</dbReference>
<dbReference type="InterPro" id="IPR050073">
    <property type="entry name" value="2-IPM_HCS-like"/>
</dbReference>
<dbReference type="InterPro" id="IPR017629">
    <property type="entry name" value="4OH_2_O-val_aldolase"/>
</dbReference>
<dbReference type="InterPro" id="IPR013785">
    <property type="entry name" value="Aldolase_TIM"/>
</dbReference>
<dbReference type="InterPro" id="IPR012425">
    <property type="entry name" value="DmpG_comm"/>
</dbReference>
<dbReference type="InterPro" id="IPR035685">
    <property type="entry name" value="DRE_TIM_HOA"/>
</dbReference>
<dbReference type="InterPro" id="IPR000891">
    <property type="entry name" value="PYR_CT"/>
</dbReference>
<dbReference type="NCBIfam" id="TIGR03217">
    <property type="entry name" value="4OH_2_O_val_ald"/>
    <property type="match status" value="1"/>
</dbReference>
<dbReference type="NCBIfam" id="NF006049">
    <property type="entry name" value="PRK08195.1"/>
    <property type="match status" value="1"/>
</dbReference>
<dbReference type="PANTHER" id="PTHR10277:SF9">
    <property type="entry name" value="2-ISOPROPYLMALATE SYNTHASE 1, CHLOROPLASTIC-RELATED"/>
    <property type="match status" value="1"/>
</dbReference>
<dbReference type="PANTHER" id="PTHR10277">
    <property type="entry name" value="HOMOCITRATE SYNTHASE-RELATED"/>
    <property type="match status" value="1"/>
</dbReference>
<dbReference type="Pfam" id="PF07836">
    <property type="entry name" value="DmpG_comm"/>
    <property type="match status" value="1"/>
</dbReference>
<dbReference type="Pfam" id="PF00682">
    <property type="entry name" value="HMGL-like"/>
    <property type="match status" value="1"/>
</dbReference>
<dbReference type="SUPFAM" id="SSF51569">
    <property type="entry name" value="Aldolase"/>
    <property type="match status" value="1"/>
</dbReference>
<dbReference type="SUPFAM" id="SSF89000">
    <property type="entry name" value="post-HMGL domain-like"/>
    <property type="match status" value="1"/>
</dbReference>
<dbReference type="PROSITE" id="PS50991">
    <property type="entry name" value="PYR_CT"/>
    <property type="match status" value="1"/>
</dbReference>
<organism>
    <name type="scientific">Azoarcus sp. (strain BH72)</name>
    <dbReference type="NCBI Taxonomy" id="418699"/>
    <lineage>
        <taxon>Bacteria</taxon>
        <taxon>Pseudomonadati</taxon>
        <taxon>Pseudomonadota</taxon>
        <taxon>Betaproteobacteria</taxon>
        <taxon>Rhodocyclales</taxon>
        <taxon>Zoogloeaceae</taxon>
        <taxon>Azoarcus</taxon>
    </lineage>
</organism>
<reference key="1">
    <citation type="journal article" date="2006" name="Nat. Biotechnol.">
        <title>Complete genome of the mutualistic, N2-fixing grass endophyte Azoarcus sp. strain BH72.</title>
        <authorList>
            <person name="Krause A."/>
            <person name="Ramakumar A."/>
            <person name="Bartels D."/>
            <person name="Battistoni F."/>
            <person name="Bekel T."/>
            <person name="Boch J."/>
            <person name="Boehm M."/>
            <person name="Friedrich F."/>
            <person name="Hurek T."/>
            <person name="Krause L."/>
            <person name="Linke B."/>
            <person name="McHardy A.C."/>
            <person name="Sarkar A."/>
            <person name="Schneiker S."/>
            <person name="Syed A.A."/>
            <person name="Thauer R."/>
            <person name="Vorhoelter F.-J."/>
            <person name="Weidner S."/>
            <person name="Puehler A."/>
            <person name="Reinhold-Hurek B."/>
            <person name="Kaiser O."/>
            <person name="Goesmann A."/>
        </authorList>
    </citation>
    <scope>NUCLEOTIDE SEQUENCE [LARGE SCALE GENOMIC DNA]</scope>
    <source>
        <strain>BH72</strain>
    </source>
</reference>
<proteinExistence type="inferred from homology"/>